<name>YDIB_ECO7I</name>
<organism>
    <name type="scientific">Escherichia coli O7:K1 (strain IAI39 / ExPEC)</name>
    <dbReference type="NCBI Taxonomy" id="585057"/>
    <lineage>
        <taxon>Bacteria</taxon>
        <taxon>Pseudomonadati</taxon>
        <taxon>Pseudomonadota</taxon>
        <taxon>Gammaproteobacteria</taxon>
        <taxon>Enterobacterales</taxon>
        <taxon>Enterobacteriaceae</taxon>
        <taxon>Escherichia</taxon>
    </lineage>
</organism>
<proteinExistence type="inferred from homology"/>
<reference key="1">
    <citation type="journal article" date="2009" name="PLoS Genet.">
        <title>Organised genome dynamics in the Escherichia coli species results in highly diverse adaptive paths.</title>
        <authorList>
            <person name="Touchon M."/>
            <person name="Hoede C."/>
            <person name="Tenaillon O."/>
            <person name="Barbe V."/>
            <person name="Baeriswyl S."/>
            <person name="Bidet P."/>
            <person name="Bingen E."/>
            <person name="Bonacorsi S."/>
            <person name="Bouchier C."/>
            <person name="Bouvet O."/>
            <person name="Calteau A."/>
            <person name="Chiapello H."/>
            <person name="Clermont O."/>
            <person name="Cruveiller S."/>
            <person name="Danchin A."/>
            <person name="Diard M."/>
            <person name="Dossat C."/>
            <person name="Karoui M.E."/>
            <person name="Frapy E."/>
            <person name="Garry L."/>
            <person name="Ghigo J.M."/>
            <person name="Gilles A.M."/>
            <person name="Johnson J."/>
            <person name="Le Bouguenec C."/>
            <person name="Lescat M."/>
            <person name="Mangenot S."/>
            <person name="Martinez-Jehanne V."/>
            <person name="Matic I."/>
            <person name="Nassif X."/>
            <person name="Oztas S."/>
            <person name="Petit M.A."/>
            <person name="Pichon C."/>
            <person name="Rouy Z."/>
            <person name="Ruf C.S."/>
            <person name="Schneider D."/>
            <person name="Tourret J."/>
            <person name="Vacherie B."/>
            <person name="Vallenet D."/>
            <person name="Medigue C."/>
            <person name="Rocha E.P.C."/>
            <person name="Denamur E."/>
        </authorList>
    </citation>
    <scope>NUCLEOTIDE SEQUENCE [LARGE SCALE GENOMIC DNA]</scope>
    <source>
        <strain>IAI39 / ExPEC</strain>
    </source>
</reference>
<keyword id="KW-0028">Amino-acid biosynthesis</keyword>
<keyword id="KW-0057">Aromatic amino acid biosynthesis</keyword>
<keyword id="KW-0520">NAD</keyword>
<keyword id="KW-0521">NADP</keyword>
<keyword id="KW-0560">Oxidoreductase</keyword>
<feature type="chain" id="PRO_1000147549" description="Quinate/shikimate dehydrogenase">
    <location>
        <begin position="1"/>
        <end position="288"/>
    </location>
</feature>
<feature type="binding site" evidence="1">
    <location>
        <position position="71"/>
    </location>
    <ligand>
        <name>substrate</name>
    </ligand>
</feature>
<feature type="binding site" evidence="1">
    <location>
        <position position="107"/>
    </location>
    <ligand>
        <name>substrate</name>
    </ligand>
</feature>
<feature type="binding site" evidence="1">
    <location>
        <begin position="132"/>
        <end position="135"/>
    </location>
    <ligand>
        <name>NAD(+)</name>
        <dbReference type="ChEBI" id="CHEBI:57540"/>
    </ligand>
</feature>
<feature type="binding site" evidence="1">
    <location>
        <begin position="155"/>
        <end position="158"/>
    </location>
    <ligand>
        <name>NAD(+)</name>
        <dbReference type="ChEBI" id="CHEBI:57540"/>
    </ligand>
</feature>
<feature type="binding site" evidence="1">
    <location>
        <position position="205"/>
    </location>
    <ligand>
        <name>NAD(+)</name>
        <dbReference type="ChEBI" id="CHEBI:57540"/>
    </ligand>
</feature>
<feature type="binding site" evidence="1">
    <location>
        <begin position="232"/>
        <end position="235"/>
    </location>
    <ligand>
        <name>NAD(+)</name>
        <dbReference type="ChEBI" id="CHEBI:57540"/>
    </ligand>
</feature>
<feature type="binding site" evidence="1">
    <location>
        <position position="255"/>
    </location>
    <ligand>
        <name>NAD(+)</name>
        <dbReference type="ChEBI" id="CHEBI:57540"/>
    </ligand>
</feature>
<accession>B7NTU4</accession>
<protein>
    <recommendedName>
        <fullName evidence="1">Quinate/shikimate dehydrogenase</fullName>
        <ecNumber evidence="1">1.1.1.282</ecNumber>
    </recommendedName>
    <alternativeName>
        <fullName evidence="1">NAD-dependent shikimate 5-dehydrogenase</fullName>
    </alternativeName>
</protein>
<sequence>MDVTAKYELIGLMAYPIRHSLSPEMQNKALEKAGLPFTYMAFEVDNDTFPAAIEGLKALKMRGTGVSMPNKQLACEYVDELTPAAKLVGAINTIVNDDGYLRGYNTDGTGHIRAIKESGFDIKGKTMVLLGAGGASTAIGAQGAIEGLKEIKLFNRRDEFFDKALAFAQRVNENTDCVVTVTDLADQQAFAEALASADILTNGTKVGMKPLENESLVNDISLLHPGLLVTECVYNPHMTKLLQQAQQAGCKTIDGYGMLLWQGAEQFTLWTGKDFPLEYVKQVMGFGA</sequence>
<comment type="function">
    <text evidence="1">The actual biological function of YdiB remains unclear, nor is it known whether 3-dehydroshikimate or quinate represents the natural substrate. Catalyzes the reversible NAD-dependent reduction of both 3-dehydroshikimate (DHSA) and 3-dehydroquinate to yield shikimate (SA) and quinate, respectively. It can use both NAD or NADP for catalysis, however it has higher catalytic efficiency with NAD.</text>
</comment>
<comment type="catalytic activity">
    <reaction evidence="1">
        <text>L-quinate + NAD(+) = 3-dehydroquinate + NADH + H(+)</text>
        <dbReference type="Rhea" id="RHEA:22364"/>
        <dbReference type="ChEBI" id="CHEBI:15378"/>
        <dbReference type="ChEBI" id="CHEBI:29751"/>
        <dbReference type="ChEBI" id="CHEBI:32364"/>
        <dbReference type="ChEBI" id="CHEBI:57540"/>
        <dbReference type="ChEBI" id="CHEBI:57945"/>
        <dbReference type="EC" id="1.1.1.282"/>
    </reaction>
</comment>
<comment type="catalytic activity">
    <reaction evidence="1">
        <text>L-quinate + NADP(+) = 3-dehydroquinate + NADPH + H(+)</text>
        <dbReference type="Rhea" id="RHEA:18425"/>
        <dbReference type="ChEBI" id="CHEBI:15378"/>
        <dbReference type="ChEBI" id="CHEBI:29751"/>
        <dbReference type="ChEBI" id="CHEBI:32364"/>
        <dbReference type="ChEBI" id="CHEBI:57783"/>
        <dbReference type="ChEBI" id="CHEBI:58349"/>
        <dbReference type="EC" id="1.1.1.282"/>
    </reaction>
</comment>
<comment type="catalytic activity">
    <reaction evidence="1">
        <text>shikimate + NADP(+) = 3-dehydroshikimate + NADPH + H(+)</text>
        <dbReference type="Rhea" id="RHEA:17737"/>
        <dbReference type="ChEBI" id="CHEBI:15378"/>
        <dbReference type="ChEBI" id="CHEBI:16630"/>
        <dbReference type="ChEBI" id="CHEBI:36208"/>
        <dbReference type="ChEBI" id="CHEBI:57783"/>
        <dbReference type="ChEBI" id="CHEBI:58349"/>
        <dbReference type="EC" id="1.1.1.282"/>
    </reaction>
</comment>
<comment type="catalytic activity">
    <reaction evidence="1">
        <text>shikimate + NAD(+) = 3-dehydroshikimate + NADH + H(+)</text>
        <dbReference type="Rhea" id="RHEA:17741"/>
        <dbReference type="ChEBI" id="CHEBI:15378"/>
        <dbReference type="ChEBI" id="CHEBI:16630"/>
        <dbReference type="ChEBI" id="CHEBI:36208"/>
        <dbReference type="ChEBI" id="CHEBI:57540"/>
        <dbReference type="ChEBI" id="CHEBI:57945"/>
        <dbReference type="EC" id="1.1.1.282"/>
    </reaction>
</comment>
<comment type="pathway">
    <text evidence="1">Metabolic intermediate biosynthesis; chorismate biosynthesis; chorismate from D-erythrose 4-phosphate and phosphoenolpyruvate: step 4/7.</text>
</comment>
<comment type="subunit">
    <text evidence="1">Homodimer.</text>
</comment>
<comment type="similarity">
    <text evidence="1">Belongs to the shikimate dehydrogenase family.</text>
</comment>
<evidence type="ECO:0000255" key="1">
    <source>
        <dbReference type="HAMAP-Rule" id="MF_01578"/>
    </source>
</evidence>
<gene>
    <name evidence="1" type="primary">ydiB</name>
    <name type="ordered locus">ECIAI39_1366</name>
</gene>
<dbReference type="EC" id="1.1.1.282" evidence="1"/>
<dbReference type="EMBL" id="CU928164">
    <property type="protein sequence ID" value="CAR17500.1"/>
    <property type="molecule type" value="Genomic_DNA"/>
</dbReference>
<dbReference type="RefSeq" id="WP_000383485.1">
    <property type="nucleotide sequence ID" value="NC_011750.1"/>
</dbReference>
<dbReference type="RefSeq" id="YP_002407372.1">
    <property type="nucleotide sequence ID" value="NC_011750.1"/>
</dbReference>
<dbReference type="SMR" id="B7NTU4"/>
<dbReference type="STRING" id="585057.ECIAI39_1366"/>
<dbReference type="KEGG" id="ect:ECIAI39_1366"/>
<dbReference type="PATRIC" id="fig|585057.6.peg.1429"/>
<dbReference type="HOGENOM" id="CLU_044063_4_4_6"/>
<dbReference type="UniPathway" id="UPA00053">
    <property type="reaction ID" value="UER00087"/>
</dbReference>
<dbReference type="Proteomes" id="UP000000749">
    <property type="component" value="Chromosome"/>
</dbReference>
<dbReference type="GO" id="GO:0030266">
    <property type="term" value="F:quinate 3-dehydrogenase (NAD+) activity"/>
    <property type="evidence" value="ECO:0007669"/>
    <property type="project" value="UniProtKB-UniRule"/>
</dbReference>
<dbReference type="GO" id="GO:0052733">
    <property type="term" value="F:quinate 3-dehydrogenase (NADP+) activity"/>
    <property type="evidence" value="ECO:0007669"/>
    <property type="project" value="InterPro"/>
</dbReference>
<dbReference type="GO" id="GO:0052734">
    <property type="term" value="F:shikimate 3-dehydrogenase (NAD+) activity"/>
    <property type="evidence" value="ECO:0007669"/>
    <property type="project" value="InterPro"/>
</dbReference>
<dbReference type="GO" id="GO:0004764">
    <property type="term" value="F:shikimate 3-dehydrogenase (NADP+) activity"/>
    <property type="evidence" value="ECO:0007669"/>
    <property type="project" value="UniProtKB-UniRule"/>
</dbReference>
<dbReference type="GO" id="GO:0008652">
    <property type="term" value="P:amino acid biosynthetic process"/>
    <property type="evidence" value="ECO:0007669"/>
    <property type="project" value="UniProtKB-KW"/>
</dbReference>
<dbReference type="GO" id="GO:0009073">
    <property type="term" value="P:aromatic amino acid family biosynthetic process"/>
    <property type="evidence" value="ECO:0007669"/>
    <property type="project" value="UniProtKB-KW"/>
</dbReference>
<dbReference type="GO" id="GO:0009423">
    <property type="term" value="P:chorismate biosynthetic process"/>
    <property type="evidence" value="ECO:0007669"/>
    <property type="project" value="UniProtKB-UniRule"/>
</dbReference>
<dbReference type="GO" id="GO:0019632">
    <property type="term" value="P:shikimate metabolic process"/>
    <property type="evidence" value="ECO:0007669"/>
    <property type="project" value="TreeGrafter"/>
</dbReference>
<dbReference type="CDD" id="cd01065">
    <property type="entry name" value="NAD_bind_Shikimate_DH"/>
    <property type="match status" value="1"/>
</dbReference>
<dbReference type="FunFam" id="3.40.50.10860:FF:000004">
    <property type="entry name" value="Quinate/shikimate dehydrogenase"/>
    <property type="match status" value="1"/>
</dbReference>
<dbReference type="FunFam" id="3.40.50.720:FF:000086">
    <property type="entry name" value="Quinate/shikimate dehydrogenase"/>
    <property type="match status" value="1"/>
</dbReference>
<dbReference type="Gene3D" id="3.40.50.10860">
    <property type="entry name" value="Leucine Dehydrogenase, chain A, domain 1"/>
    <property type="match status" value="1"/>
</dbReference>
<dbReference type="Gene3D" id="3.40.50.720">
    <property type="entry name" value="NAD(P)-binding Rossmann-like Domain"/>
    <property type="match status" value="1"/>
</dbReference>
<dbReference type="HAMAP" id="MF_00222">
    <property type="entry name" value="Shikimate_DH_AroE"/>
    <property type="match status" value="1"/>
</dbReference>
<dbReference type="HAMAP" id="MF_01578">
    <property type="entry name" value="Shikimate_DH_YdiB"/>
    <property type="match status" value="1"/>
</dbReference>
<dbReference type="InterPro" id="IPR046346">
    <property type="entry name" value="Aminoacid_DH-like_N_sf"/>
</dbReference>
<dbReference type="InterPro" id="IPR036291">
    <property type="entry name" value="NAD(P)-bd_dom_sf"/>
</dbReference>
<dbReference type="InterPro" id="IPR022872">
    <property type="entry name" value="Quinate/Shikimate_DH"/>
</dbReference>
<dbReference type="InterPro" id="IPR041121">
    <property type="entry name" value="SDH_C"/>
</dbReference>
<dbReference type="InterPro" id="IPR013708">
    <property type="entry name" value="Shikimate_DH-bd_N"/>
</dbReference>
<dbReference type="InterPro" id="IPR022893">
    <property type="entry name" value="Shikimate_DH_fam"/>
</dbReference>
<dbReference type="NCBIfam" id="NF009390">
    <property type="entry name" value="PRK12749.1"/>
    <property type="match status" value="1"/>
</dbReference>
<dbReference type="PANTHER" id="PTHR21089:SF1">
    <property type="entry name" value="BIFUNCTIONAL 3-DEHYDROQUINATE DEHYDRATASE_SHIKIMATE DEHYDROGENASE, CHLOROPLASTIC"/>
    <property type="match status" value="1"/>
</dbReference>
<dbReference type="PANTHER" id="PTHR21089">
    <property type="entry name" value="SHIKIMATE DEHYDROGENASE"/>
    <property type="match status" value="1"/>
</dbReference>
<dbReference type="Pfam" id="PF18317">
    <property type="entry name" value="SDH_C"/>
    <property type="match status" value="1"/>
</dbReference>
<dbReference type="Pfam" id="PF08501">
    <property type="entry name" value="Shikimate_dh_N"/>
    <property type="match status" value="1"/>
</dbReference>
<dbReference type="SUPFAM" id="SSF53223">
    <property type="entry name" value="Aminoacid dehydrogenase-like, N-terminal domain"/>
    <property type="match status" value="1"/>
</dbReference>
<dbReference type="SUPFAM" id="SSF51735">
    <property type="entry name" value="NAD(P)-binding Rossmann-fold domains"/>
    <property type="match status" value="1"/>
</dbReference>